<dbReference type="EC" id="1.2.1.38" evidence="1"/>
<dbReference type="EMBL" id="CP001177">
    <property type="protein sequence ID" value="ACJ81074.1"/>
    <property type="molecule type" value="Genomic_DNA"/>
</dbReference>
<dbReference type="SMR" id="B7HNP9"/>
<dbReference type="KEGG" id="bcr:BCAH187_A4266"/>
<dbReference type="HOGENOM" id="CLU_006384_0_1_9"/>
<dbReference type="UniPathway" id="UPA00068">
    <property type="reaction ID" value="UER00108"/>
</dbReference>
<dbReference type="Proteomes" id="UP000002214">
    <property type="component" value="Chromosome"/>
</dbReference>
<dbReference type="GO" id="GO:0005737">
    <property type="term" value="C:cytoplasm"/>
    <property type="evidence" value="ECO:0007669"/>
    <property type="project" value="UniProtKB-SubCell"/>
</dbReference>
<dbReference type="GO" id="GO:0003942">
    <property type="term" value="F:N-acetyl-gamma-glutamyl-phosphate reductase activity"/>
    <property type="evidence" value="ECO:0007669"/>
    <property type="project" value="UniProtKB-UniRule"/>
</dbReference>
<dbReference type="GO" id="GO:0051287">
    <property type="term" value="F:NAD binding"/>
    <property type="evidence" value="ECO:0007669"/>
    <property type="project" value="InterPro"/>
</dbReference>
<dbReference type="GO" id="GO:0070401">
    <property type="term" value="F:NADP+ binding"/>
    <property type="evidence" value="ECO:0007669"/>
    <property type="project" value="InterPro"/>
</dbReference>
<dbReference type="GO" id="GO:0006526">
    <property type="term" value="P:L-arginine biosynthetic process"/>
    <property type="evidence" value="ECO:0007669"/>
    <property type="project" value="UniProtKB-UniRule"/>
</dbReference>
<dbReference type="CDD" id="cd23934">
    <property type="entry name" value="AGPR_1_C"/>
    <property type="match status" value="1"/>
</dbReference>
<dbReference type="CDD" id="cd17895">
    <property type="entry name" value="AGPR_1_N"/>
    <property type="match status" value="1"/>
</dbReference>
<dbReference type="FunFam" id="3.30.360.10:FF:000014">
    <property type="entry name" value="N-acetyl-gamma-glutamyl-phosphate reductase"/>
    <property type="match status" value="1"/>
</dbReference>
<dbReference type="FunFam" id="3.40.50.720:FF:000117">
    <property type="entry name" value="N-acetyl-gamma-glutamyl-phosphate reductase"/>
    <property type="match status" value="1"/>
</dbReference>
<dbReference type="Gene3D" id="3.30.360.10">
    <property type="entry name" value="Dihydrodipicolinate Reductase, domain 2"/>
    <property type="match status" value="1"/>
</dbReference>
<dbReference type="Gene3D" id="3.40.50.720">
    <property type="entry name" value="NAD(P)-binding Rossmann-like Domain"/>
    <property type="match status" value="1"/>
</dbReference>
<dbReference type="HAMAP" id="MF_00150">
    <property type="entry name" value="ArgC_type1"/>
    <property type="match status" value="1"/>
</dbReference>
<dbReference type="InterPro" id="IPR000706">
    <property type="entry name" value="AGPR_type-1"/>
</dbReference>
<dbReference type="InterPro" id="IPR036291">
    <property type="entry name" value="NAD(P)-bd_dom_sf"/>
</dbReference>
<dbReference type="InterPro" id="IPR050085">
    <property type="entry name" value="NAGSA_dehydrogenase"/>
</dbReference>
<dbReference type="InterPro" id="IPR000534">
    <property type="entry name" value="Semialdehyde_DH_NAD-bd"/>
</dbReference>
<dbReference type="NCBIfam" id="TIGR01850">
    <property type="entry name" value="argC"/>
    <property type="match status" value="1"/>
</dbReference>
<dbReference type="PANTHER" id="PTHR32338:SF10">
    <property type="entry name" value="N-ACETYL-GAMMA-GLUTAMYL-PHOSPHATE REDUCTASE, CHLOROPLASTIC-RELATED"/>
    <property type="match status" value="1"/>
</dbReference>
<dbReference type="PANTHER" id="PTHR32338">
    <property type="entry name" value="N-ACETYL-GAMMA-GLUTAMYL-PHOSPHATE REDUCTASE, CHLOROPLASTIC-RELATED-RELATED"/>
    <property type="match status" value="1"/>
</dbReference>
<dbReference type="Pfam" id="PF01118">
    <property type="entry name" value="Semialdhyde_dh"/>
    <property type="match status" value="1"/>
</dbReference>
<dbReference type="Pfam" id="PF22698">
    <property type="entry name" value="Semialdhyde_dhC_1"/>
    <property type="match status" value="1"/>
</dbReference>
<dbReference type="SMART" id="SM00859">
    <property type="entry name" value="Semialdhyde_dh"/>
    <property type="match status" value="1"/>
</dbReference>
<dbReference type="SUPFAM" id="SSF55347">
    <property type="entry name" value="Glyceraldehyde-3-phosphate dehydrogenase-like, C-terminal domain"/>
    <property type="match status" value="1"/>
</dbReference>
<dbReference type="SUPFAM" id="SSF51735">
    <property type="entry name" value="NAD(P)-binding Rossmann-fold domains"/>
    <property type="match status" value="1"/>
</dbReference>
<gene>
    <name evidence="1" type="primary">argC</name>
    <name type="ordered locus">BCAH187_A4266</name>
</gene>
<proteinExistence type="inferred from homology"/>
<sequence length="345" mass="38545">MKVAIIGATGYGGIELIRLLEQHPYFSIASLHSFSQVGECITNVYPHFQNVLVHTLQEIDAEEIVKEAEIVFLATPAGVSAELTPKLLAVGLKVIDLSGDFRMKDPFIYEQWYKRAAAKEEILSKAVYGLSEWKRSEVQNANLIANPGCFATAALLATLPLVRSGIIEEDSIIIDAKSGVSGAGKTPTTMTHFPELYDNLRIYKVNEHQHVPEIEQMLAEWNRETKPITFSTHLIPISRGIMVTLYAKVKREMEIEQLQKLYEETYEQSPFIRIRLQGEFPSPKEVRGSNYCDMGIAYDERTGRVTVVSVIDNMMKGAAGQAIQNANIIAGLEETTGLQHMPLYL</sequence>
<feature type="chain" id="PRO_1000118053" description="N-acetyl-gamma-glutamyl-phosphate reductase">
    <location>
        <begin position="1"/>
        <end position="345"/>
    </location>
</feature>
<feature type="active site" evidence="1">
    <location>
        <position position="149"/>
    </location>
</feature>
<protein>
    <recommendedName>
        <fullName evidence="1">N-acetyl-gamma-glutamyl-phosphate reductase</fullName>
        <shortName evidence="1">AGPR</shortName>
        <ecNumber evidence="1">1.2.1.38</ecNumber>
    </recommendedName>
    <alternativeName>
        <fullName evidence="1">N-acetyl-glutamate semialdehyde dehydrogenase</fullName>
        <shortName evidence="1">NAGSA dehydrogenase</shortName>
    </alternativeName>
</protein>
<accession>B7HNP9</accession>
<reference key="1">
    <citation type="submission" date="2008-10" db="EMBL/GenBank/DDBJ databases">
        <title>Genome sequence of Bacillus cereus AH187.</title>
        <authorList>
            <person name="Dodson R.J."/>
            <person name="Durkin A.S."/>
            <person name="Rosovitz M.J."/>
            <person name="Rasko D.A."/>
            <person name="Kolsto A.B."/>
            <person name="Okstad O.A."/>
            <person name="Ravel J."/>
            <person name="Sutton G."/>
        </authorList>
    </citation>
    <scope>NUCLEOTIDE SEQUENCE [LARGE SCALE GENOMIC DNA]</scope>
    <source>
        <strain>AH187</strain>
    </source>
</reference>
<comment type="function">
    <text evidence="1">Catalyzes the NADPH-dependent reduction of N-acetyl-5-glutamyl phosphate to yield N-acetyl-L-glutamate 5-semialdehyde.</text>
</comment>
<comment type="catalytic activity">
    <reaction evidence="1">
        <text>N-acetyl-L-glutamate 5-semialdehyde + phosphate + NADP(+) = N-acetyl-L-glutamyl 5-phosphate + NADPH + H(+)</text>
        <dbReference type="Rhea" id="RHEA:21588"/>
        <dbReference type="ChEBI" id="CHEBI:15378"/>
        <dbReference type="ChEBI" id="CHEBI:29123"/>
        <dbReference type="ChEBI" id="CHEBI:43474"/>
        <dbReference type="ChEBI" id="CHEBI:57783"/>
        <dbReference type="ChEBI" id="CHEBI:57936"/>
        <dbReference type="ChEBI" id="CHEBI:58349"/>
        <dbReference type="EC" id="1.2.1.38"/>
    </reaction>
</comment>
<comment type="pathway">
    <text evidence="1">Amino-acid biosynthesis; L-arginine biosynthesis; N(2)-acetyl-L-ornithine from L-glutamate: step 3/4.</text>
</comment>
<comment type="subcellular location">
    <subcellularLocation>
        <location evidence="1">Cytoplasm</location>
    </subcellularLocation>
</comment>
<comment type="similarity">
    <text evidence="1">Belongs to the NAGSA dehydrogenase family. Type 1 subfamily.</text>
</comment>
<name>ARGC_BACC7</name>
<organism>
    <name type="scientific">Bacillus cereus (strain AH187)</name>
    <dbReference type="NCBI Taxonomy" id="405534"/>
    <lineage>
        <taxon>Bacteria</taxon>
        <taxon>Bacillati</taxon>
        <taxon>Bacillota</taxon>
        <taxon>Bacilli</taxon>
        <taxon>Bacillales</taxon>
        <taxon>Bacillaceae</taxon>
        <taxon>Bacillus</taxon>
        <taxon>Bacillus cereus group</taxon>
    </lineage>
</organism>
<keyword id="KW-0028">Amino-acid biosynthesis</keyword>
<keyword id="KW-0055">Arginine biosynthesis</keyword>
<keyword id="KW-0963">Cytoplasm</keyword>
<keyword id="KW-0521">NADP</keyword>
<keyword id="KW-0560">Oxidoreductase</keyword>
<evidence type="ECO:0000255" key="1">
    <source>
        <dbReference type="HAMAP-Rule" id="MF_00150"/>
    </source>
</evidence>